<name>CB5D1_XENLA</name>
<organism>
    <name type="scientific">Xenopus laevis</name>
    <name type="common">African clawed frog</name>
    <dbReference type="NCBI Taxonomy" id="8355"/>
    <lineage>
        <taxon>Eukaryota</taxon>
        <taxon>Metazoa</taxon>
        <taxon>Chordata</taxon>
        <taxon>Craniata</taxon>
        <taxon>Vertebrata</taxon>
        <taxon>Euteleostomi</taxon>
        <taxon>Amphibia</taxon>
        <taxon>Batrachia</taxon>
        <taxon>Anura</taxon>
        <taxon>Pipoidea</taxon>
        <taxon>Pipidae</taxon>
        <taxon>Xenopodinae</taxon>
        <taxon>Xenopus</taxon>
        <taxon>Xenopus</taxon>
    </lineage>
</organism>
<evidence type="ECO:0000250" key="1">
    <source>
        <dbReference type="UniProtKB" id="Q567I9"/>
    </source>
</evidence>
<evidence type="ECO:0000255" key="2">
    <source>
        <dbReference type="PROSITE-ProRule" id="PRU00279"/>
    </source>
</evidence>
<evidence type="ECO:0000305" key="3"/>
<comment type="function">
    <text evidence="1">Radial spoke stalk protein that binds heme under oxidizing conditions. Required for the coordinated beating of multiple cilia maybe by functioning in a redox signaling pathway.</text>
</comment>
<comment type="subcellular location">
    <subcellularLocation>
        <location evidence="1">Cytoplasm</location>
        <location evidence="1">Cytoskeleton</location>
        <location evidence="1">Cilium axoneme</location>
    </subcellularLocation>
    <text evidence="1">Localizes to the radial spoke stalk.</text>
</comment>
<comment type="similarity">
    <text evidence="3">Belongs to the cytochrome b5 family.</text>
</comment>
<proteinExistence type="evidence at transcript level"/>
<protein>
    <recommendedName>
        <fullName>Cytochrome b5 domain-containing protein 1</fullName>
    </recommendedName>
</protein>
<feature type="chain" id="PRO_0000312319" description="Cytochrome b5 domain-containing protein 1">
    <location>
        <begin position="1"/>
        <end position="217"/>
    </location>
</feature>
<feature type="domain" description="Cytochrome b5 heme-binding" evidence="2">
    <location>
        <begin position="6"/>
        <end position="72"/>
    </location>
</feature>
<feature type="binding site" description="axial binding residue" evidence="2">
    <location>
        <position position="41"/>
    </location>
    <ligand>
        <name>heme</name>
        <dbReference type="ChEBI" id="CHEBI:30413"/>
    </ligand>
    <ligandPart>
        <name>Fe</name>
        <dbReference type="ChEBI" id="CHEBI:18248"/>
    </ligandPart>
</feature>
<feature type="binding site" description="axial binding residue" evidence="2">
    <location>
        <position position="72"/>
    </location>
    <ligand>
        <name>heme</name>
        <dbReference type="ChEBI" id="CHEBI:30413"/>
    </ligand>
    <ligandPart>
        <name>Fe</name>
        <dbReference type="ChEBI" id="CHEBI:18248"/>
    </ligandPart>
</feature>
<dbReference type="EMBL" id="BC087536">
    <property type="protein sequence ID" value="AAH87536.1"/>
    <property type="molecule type" value="mRNA"/>
</dbReference>
<dbReference type="RefSeq" id="NP_001088827.1">
    <property type="nucleotide sequence ID" value="NM_001095358.1"/>
</dbReference>
<dbReference type="SMR" id="Q5PPR6"/>
<dbReference type="DNASU" id="496103"/>
<dbReference type="GeneID" id="496103"/>
<dbReference type="KEGG" id="xla:496103"/>
<dbReference type="AGR" id="Xenbase:XB-GENE-6252543"/>
<dbReference type="CTD" id="496103"/>
<dbReference type="Xenbase" id="XB-GENE-6252543">
    <property type="gene designation" value="cyb5d1.L"/>
</dbReference>
<dbReference type="OMA" id="DLTHFFH"/>
<dbReference type="OrthoDB" id="260091at2759"/>
<dbReference type="Proteomes" id="UP000186698">
    <property type="component" value="Chromosome 3L"/>
</dbReference>
<dbReference type="Bgee" id="496103">
    <property type="expression patterns" value="Expressed in testis and 17 other cell types or tissues"/>
</dbReference>
<dbReference type="GO" id="GO:0042995">
    <property type="term" value="C:cell projection"/>
    <property type="evidence" value="ECO:0007669"/>
    <property type="project" value="UniProtKB-KW"/>
</dbReference>
<dbReference type="GO" id="GO:0005737">
    <property type="term" value="C:cytoplasm"/>
    <property type="evidence" value="ECO:0007669"/>
    <property type="project" value="UniProtKB-KW"/>
</dbReference>
<dbReference type="GO" id="GO:0005856">
    <property type="term" value="C:cytoskeleton"/>
    <property type="evidence" value="ECO:0007669"/>
    <property type="project" value="UniProtKB-KW"/>
</dbReference>
<dbReference type="GO" id="GO:0046872">
    <property type="term" value="F:metal ion binding"/>
    <property type="evidence" value="ECO:0007669"/>
    <property type="project" value="UniProtKB-KW"/>
</dbReference>
<dbReference type="GO" id="GO:0003341">
    <property type="term" value="P:cilium movement"/>
    <property type="evidence" value="ECO:0000318"/>
    <property type="project" value="GO_Central"/>
</dbReference>
<dbReference type="GO" id="GO:0003356">
    <property type="term" value="P:regulation of cilium beat frequency"/>
    <property type="evidence" value="ECO:0000250"/>
    <property type="project" value="UniProtKB"/>
</dbReference>
<dbReference type="Gene3D" id="3.10.120.10">
    <property type="entry name" value="Cytochrome b5-like heme/steroid binding domain"/>
    <property type="match status" value="1"/>
</dbReference>
<dbReference type="InterPro" id="IPR001199">
    <property type="entry name" value="Cyt_B5-like_heme/steroid-bd"/>
</dbReference>
<dbReference type="InterPro" id="IPR036400">
    <property type="entry name" value="Cyt_B5-like_heme/steroid_sf"/>
</dbReference>
<dbReference type="InterPro" id="IPR052320">
    <property type="entry name" value="Cytochrome_b5_domain"/>
</dbReference>
<dbReference type="PANTHER" id="PTHR21281">
    <property type="entry name" value="CYTOCHROME B5 DOMAIN-CONTAINING PROTEIN 1"/>
    <property type="match status" value="1"/>
</dbReference>
<dbReference type="PANTHER" id="PTHR21281:SF0">
    <property type="entry name" value="CYTOCHROME B5 DOMAIN-CONTAINING PROTEIN 1"/>
    <property type="match status" value="1"/>
</dbReference>
<dbReference type="Pfam" id="PF00173">
    <property type="entry name" value="Cyt-b5"/>
    <property type="match status" value="1"/>
</dbReference>
<dbReference type="SMART" id="SM01117">
    <property type="entry name" value="Cyt-b5"/>
    <property type="match status" value="1"/>
</dbReference>
<dbReference type="SUPFAM" id="SSF55856">
    <property type="entry name" value="Cytochrome b5-like heme/steroid binding domain"/>
    <property type="match status" value="1"/>
</dbReference>
<dbReference type="PROSITE" id="PS50255">
    <property type="entry name" value="CYTOCHROME_B5_2"/>
    <property type="match status" value="1"/>
</dbReference>
<sequence length="217" mass="25241">MSPVRPRYFTPREVSRHCVLSDLWVSYLGRVYDLTPLLEQHKGDVLLKPIIAAGGRDISHWFNPKTGDVKTHIDPQTGCLKYYTPQGRFLHIAPCFPCSGWDNDFGRPWWKDTIYQVGILSSKTRFIRIINTLTSQEQMLEVCSEETIWEILQRYLAYNAHAASYTWKFCGVPLDMDKTLQENGVQDEDLEFEELKIDADLYTPSIHLYFNDDLTEL</sequence>
<gene>
    <name type="primary">cyb5d1</name>
</gene>
<reference key="1">
    <citation type="submission" date="2004-12" db="EMBL/GenBank/DDBJ databases">
        <authorList>
            <consortium name="NIH - Xenopus Gene Collection (XGC) project"/>
        </authorList>
    </citation>
    <scope>NUCLEOTIDE SEQUENCE [LARGE SCALE MRNA]</scope>
    <source>
        <tissue>Testis</tissue>
    </source>
</reference>
<keyword id="KW-0966">Cell projection</keyword>
<keyword id="KW-0963">Cytoplasm</keyword>
<keyword id="KW-0206">Cytoskeleton</keyword>
<keyword id="KW-0349">Heme</keyword>
<keyword id="KW-0408">Iron</keyword>
<keyword id="KW-0479">Metal-binding</keyword>
<keyword id="KW-1185">Reference proteome</keyword>
<accession>Q5PPR6</accession>